<keyword id="KW-0028">Amino-acid biosynthesis</keyword>
<keyword id="KW-0413">Isomerase</keyword>
<keyword id="KW-0486">Methionine biosynthesis</keyword>
<keyword id="KW-1185">Reference proteome</keyword>
<reference key="1">
    <citation type="journal article" date="1998" name="Nature">
        <title>The complete genome of the hyperthermophilic bacterium Aquifex aeolicus.</title>
        <authorList>
            <person name="Deckert G."/>
            <person name="Warren P.V."/>
            <person name="Gaasterland T."/>
            <person name="Young W.G."/>
            <person name="Lenox A.L."/>
            <person name="Graham D.E."/>
            <person name="Overbeek R."/>
            <person name="Snead M.A."/>
            <person name="Keller M."/>
            <person name="Aujay M."/>
            <person name="Huber R."/>
            <person name="Feldman R.A."/>
            <person name="Short J.M."/>
            <person name="Olsen G.J."/>
            <person name="Swanson R.V."/>
        </authorList>
    </citation>
    <scope>NUCLEOTIDE SEQUENCE [LARGE SCALE GENOMIC DNA]</scope>
    <source>
        <strain>VF5</strain>
    </source>
</reference>
<organism>
    <name type="scientific">Aquifex aeolicus (strain VF5)</name>
    <dbReference type="NCBI Taxonomy" id="224324"/>
    <lineage>
        <taxon>Bacteria</taxon>
        <taxon>Pseudomonadati</taxon>
        <taxon>Aquificota</taxon>
        <taxon>Aquificia</taxon>
        <taxon>Aquificales</taxon>
        <taxon>Aquificaceae</taxon>
        <taxon>Aquifex</taxon>
    </lineage>
</organism>
<sequence length="456" mass="50498">MDIRTHLGINQELSGKPVKVAEGYAEVLLKTQESMKADDKGLVHGGFIFSAADYASMLAVNHPNVVLAGANVKFLKPVKVGDEIICKARVSEDKGKKKKVLVECFKGEDKVFEGEFFTVFLIDMFWRGEKMEVKPFYWKGDKLLLLDQRKLPHQEVWLELKTYEEVAKAIKEMAVRGAPAIGCTAAYGFVLGVKVQKEDPEKVYETLKNTRPTAYNLFWALDRMMKALKEGKDIEEEAKEIEKEDYEANKRMGEIGSEIVPLNAKVLTHCNTGALATAGWGTALGVIRSAHYGGKNIFVWVDETRPYLQGARLTAWELVKESIPHKIITDSTAGFLMKKGMVDLVIVGADRITAKGDVANKIGTYTLAVLCKEHNVPFYVAAPTSTIDSNIKSGEEIIIEERSPEEVKVCGGCAIAPKESDALHLAFDITPAELITGIITEKGIFKPERITEALKD</sequence>
<gene>
    <name type="primary">mtnA</name>
    <name type="ordered locus">aq_2114</name>
</gene>
<evidence type="ECO:0000250" key="1"/>
<evidence type="ECO:0000305" key="2"/>
<protein>
    <recommendedName>
        <fullName>Methylthioribose-1-phosphate isomerase</fullName>
        <shortName>M1Pi</shortName>
        <shortName>MTR-1-P isomerase</shortName>
        <ecNumber>5.3.1.23</ecNumber>
    </recommendedName>
    <alternativeName>
        <fullName>S-methyl-5-thioribose-1-phosphate isomerase</fullName>
    </alternativeName>
</protein>
<feature type="chain" id="PRO_0000156091" description="Methylthioribose-1-phosphate isomerase">
    <location>
        <begin position="1"/>
        <end position="456"/>
    </location>
</feature>
<feature type="region of interest" description="Thioesterase">
    <location>
        <begin position="40"/>
        <end position="113"/>
    </location>
</feature>
<feature type="region of interest" description="MTR-1-P isomerase">
    <location>
        <begin position="124"/>
        <end position="456"/>
    </location>
</feature>
<feature type="active site" description="Proton donor" evidence="1">
    <location>
        <position position="350"/>
    </location>
</feature>
<feature type="binding site" evidence="1">
    <location>
        <begin position="176"/>
        <end position="178"/>
    </location>
    <ligand>
        <name>substrate</name>
    </ligand>
</feature>
<feature type="binding site" evidence="1">
    <location>
        <position position="211"/>
    </location>
    <ligand>
        <name>substrate</name>
    </ligand>
</feature>
<feature type="binding site" evidence="1">
    <location>
        <position position="309"/>
    </location>
    <ligand>
        <name>substrate</name>
    </ligand>
</feature>
<feature type="binding site" evidence="1">
    <location>
        <begin position="360"/>
        <end position="361"/>
    </location>
    <ligand>
        <name>substrate</name>
    </ligand>
</feature>
<feature type="site" description="Transition state stabilizer" evidence="1">
    <location>
        <position position="270"/>
    </location>
</feature>
<comment type="function">
    <text evidence="1">Catalyzes the interconversion of methylthioribose-1-phosphate (MTR-1-P) into methylthioribulose-1-phosphate (MTRu-1-P).</text>
</comment>
<comment type="catalytic activity">
    <reaction>
        <text>5-(methylsulfanyl)-alpha-D-ribose 1-phosphate = 5-(methylsulfanyl)-D-ribulose 1-phosphate</text>
        <dbReference type="Rhea" id="RHEA:19989"/>
        <dbReference type="ChEBI" id="CHEBI:58533"/>
        <dbReference type="ChEBI" id="CHEBI:58548"/>
        <dbReference type="EC" id="5.3.1.23"/>
    </reaction>
</comment>
<comment type="pathway">
    <text>Amino-acid biosynthesis; L-methionine biosynthesis via salvage pathway; L-methionine from S-methyl-5-thio-alpha-D-ribose 1-phosphate: step 1/6.</text>
</comment>
<comment type="similarity">
    <text evidence="2">Belongs to the eIF-2B alpha/beta/delta subunits family. MtnA subfamily.</text>
</comment>
<accession>O67879</accession>
<proteinExistence type="inferred from homology"/>
<dbReference type="EC" id="5.3.1.23"/>
<dbReference type="EMBL" id="AE000657">
    <property type="protein sequence ID" value="AAC07840.1"/>
    <property type="molecule type" value="Genomic_DNA"/>
</dbReference>
<dbReference type="PIR" id="C70481">
    <property type="entry name" value="C70481"/>
</dbReference>
<dbReference type="RefSeq" id="NP_214448.1">
    <property type="nucleotide sequence ID" value="NC_000918.1"/>
</dbReference>
<dbReference type="SMR" id="O67879"/>
<dbReference type="STRING" id="224324.aq_2114"/>
<dbReference type="EnsemblBacteria" id="AAC07840">
    <property type="protein sequence ID" value="AAC07840"/>
    <property type="gene ID" value="aq_2114"/>
</dbReference>
<dbReference type="KEGG" id="aae:aq_2114"/>
<dbReference type="eggNOG" id="COG0182">
    <property type="taxonomic scope" value="Bacteria"/>
</dbReference>
<dbReference type="eggNOG" id="COG2050">
    <property type="taxonomic scope" value="Bacteria"/>
</dbReference>
<dbReference type="HOGENOM" id="CLU_016218_1_2_0"/>
<dbReference type="InParanoid" id="O67879"/>
<dbReference type="OrthoDB" id="9803436at2"/>
<dbReference type="UniPathway" id="UPA00904">
    <property type="reaction ID" value="UER00874"/>
</dbReference>
<dbReference type="Proteomes" id="UP000000798">
    <property type="component" value="Chromosome"/>
</dbReference>
<dbReference type="GO" id="GO:0046523">
    <property type="term" value="F:S-methyl-5-thioribose-1-phosphate isomerase activity"/>
    <property type="evidence" value="ECO:0000318"/>
    <property type="project" value="GO_Central"/>
</dbReference>
<dbReference type="GO" id="GO:0019509">
    <property type="term" value="P:L-methionine salvage from methylthioadenosine"/>
    <property type="evidence" value="ECO:0000318"/>
    <property type="project" value="GO_Central"/>
</dbReference>
<dbReference type="CDD" id="cd03440">
    <property type="entry name" value="hot_dog"/>
    <property type="match status" value="1"/>
</dbReference>
<dbReference type="FunFam" id="1.20.120.420:FF:000008">
    <property type="entry name" value="Methylthioribose-1-phosphate isomerase"/>
    <property type="match status" value="1"/>
</dbReference>
<dbReference type="FunFam" id="3.40.50.10470:FF:000006">
    <property type="entry name" value="Methylthioribose-1-phosphate isomerase"/>
    <property type="match status" value="1"/>
</dbReference>
<dbReference type="Gene3D" id="3.10.129.10">
    <property type="entry name" value="Hotdog Thioesterase"/>
    <property type="match status" value="1"/>
</dbReference>
<dbReference type="Gene3D" id="1.20.120.420">
    <property type="entry name" value="translation initiation factor eif-2b, domain 1"/>
    <property type="match status" value="1"/>
</dbReference>
<dbReference type="Gene3D" id="3.40.50.10470">
    <property type="entry name" value="Translation initiation factor eif-2b, domain 2"/>
    <property type="match status" value="1"/>
</dbReference>
<dbReference type="HAMAP" id="MF_01678">
    <property type="entry name" value="Salvage_MtnA"/>
    <property type="match status" value="1"/>
</dbReference>
<dbReference type="InterPro" id="IPR029069">
    <property type="entry name" value="HotDog_dom_sf"/>
</dbReference>
<dbReference type="InterPro" id="IPR000649">
    <property type="entry name" value="IF-2B-related"/>
</dbReference>
<dbReference type="InterPro" id="IPR005251">
    <property type="entry name" value="IF-M1Pi"/>
</dbReference>
<dbReference type="InterPro" id="IPR042529">
    <property type="entry name" value="IF_2B-like_C"/>
</dbReference>
<dbReference type="InterPro" id="IPR011559">
    <property type="entry name" value="Initiation_fac_2B_a/b/d"/>
</dbReference>
<dbReference type="InterPro" id="IPR027363">
    <property type="entry name" value="M1Pi_N"/>
</dbReference>
<dbReference type="InterPro" id="IPR037171">
    <property type="entry name" value="NagB/RpiA_transferase-like"/>
</dbReference>
<dbReference type="InterPro" id="IPR006683">
    <property type="entry name" value="Thioestr_dom"/>
</dbReference>
<dbReference type="NCBIfam" id="TIGR00524">
    <property type="entry name" value="eIF-2B_rel"/>
    <property type="match status" value="1"/>
</dbReference>
<dbReference type="NCBIfam" id="NF004326">
    <property type="entry name" value="PRK05720.1"/>
    <property type="match status" value="1"/>
</dbReference>
<dbReference type="NCBIfam" id="TIGR00512">
    <property type="entry name" value="salvage_mtnA"/>
    <property type="match status" value="1"/>
</dbReference>
<dbReference type="PANTHER" id="PTHR43475">
    <property type="entry name" value="METHYLTHIORIBOSE-1-PHOSPHATE ISOMERASE"/>
    <property type="match status" value="1"/>
</dbReference>
<dbReference type="PANTHER" id="PTHR43475:SF1">
    <property type="entry name" value="METHYLTHIORIBOSE-1-PHOSPHATE ISOMERASE"/>
    <property type="match status" value="1"/>
</dbReference>
<dbReference type="Pfam" id="PF03061">
    <property type="entry name" value="4HBT"/>
    <property type="match status" value="1"/>
</dbReference>
<dbReference type="Pfam" id="PF01008">
    <property type="entry name" value="IF-2B"/>
    <property type="match status" value="1"/>
</dbReference>
<dbReference type="SUPFAM" id="SSF100950">
    <property type="entry name" value="NagB/RpiA/CoA transferase-like"/>
    <property type="match status" value="1"/>
</dbReference>
<dbReference type="SUPFAM" id="SSF54637">
    <property type="entry name" value="Thioesterase/thiol ester dehydrase-isomerase"/>
    <property type="match status" value="1"/>
</dbReference>
<name>MTNA_AQUAE</name>